<organism>
    <name type="scientific">Halalkalibacterium halodurans (strain ATCC BAA-125 / DSM 18197 / FERM 7344 / JCM 9153 / C-125)</name>
    <name type="common">Bacillus halodurans</name>
    <dbReference type="NCBI Taxonomy" id="272558"/>
    <lineage>
        <taxon>Bacteria</taxon>
        <taxon>Bacillati</taxon>
        <taxon>Bacillota</taxon>
        <taxon>Bacilli</taxon>
        <taxon>Bacillales</taxon>
        <taxon>Bacillaceae</taxon>
        <taxon>Halalkalibacterium (ex Joshi et al. 2022)</taxon>
    </lineage>
</organism>
<comment type="function">
    <text evidence="1">Catalyzes the reversible isomerization-deamination of glucosamine 6-phosphate (GlcN6P) to form fructose 6-phosphate (Fru6P) and ammonium ion.</text>
</comment>
<comment type="catalytic activity">
    <reaction evidence="1">
        <text>alpha-D-glucosamine 6-phosphate + H2O = beta-D-fructose 6-phosphate + NH4(+)</text>
        <dbReference type="Rhea" id="RHEA:12172"/>
        <dbReference type="ChEBI" id="CHEBI:15377"/>
        <dbReference type="ChEBI" id="CHEBI:28938"/>
        <dbReference type="ChEBI" id="CHEBI:57634"/>
        <dbReference type="ChEBI" id="CHEBI:75989"/>
        <dbReference type="EC" id="3.5.99.6"/>
    </reaction>
</comment>
<comment type="pathway">
    <text evidence="1">Amino-sugar metabolism; N-acetylneuraminate degradation; D-fructose 6-phosphate from N-acetylneuraminate: step 5/5.</text>
</comment>
<comment type="similarity">
    <text evidence="1">Belongs to the glucosamine/galactosamine-6-phosphate isomerase family. NagB subfamily.</text>
</comment>
<evidence type="ECO:0000255" key="1">
    <source>
        <dbReference type="HAMAP-Rule" id="MF_01241"/>
    </source>
</evidence>
<dbReference type="EC" id="3.5.99.6" evidence="1"/>
<dbReference type="EMBL" id="BA000004">
    <property type="protein sequence ID" value="BAB04139.1"/>
    <property type="molecule type" value="Genomic_DNA"/>
</dbReference>
<dbReference type="PIR" id="D83702">
    <property type="entry name" value="D83702"/>
</dbReference>
<dbReference type="RefSeq" id="WP_010896598.1">
    <property type="nucleotide sequence ID" value="NC_002570.2"/>
</dbReference>
<dbReference type="SMR" id="Q9KFQ8"/>
<dbReference type="STRING" id="272558.gene:10726273"/>
<dbReference type="KEGG" id="bha:BH0420"/>
<dbReference type="eggNOG" id="COG0363">
    <property type="taxonomic scope" value="Bacteria"/>
</dbReference>
<dbReference type="HOGENOM" id="CLU_049611_1_1_9"/>
<dbReference type="OrthoDB" id="9791139at2"/>
<dbReference type="UniPathway" id="UPA00629">
    <property type="reaction ID" value="UER00684"/>
</dbReference>
<dbReference type="Proteomes" id="UP000001258">
    <property type="component" value="Chromosome"/>
</dbReference>
<dbReference type="GO" id="GO:0005737">
    <property type="term" value="C:cytoplasm"/>
    <property type="evidence" value="ECO:0007669"/>
    <property type="project" value="TreeGrafter"/>
</dbReference>
<dbReference type="GO" id="GO:0004342">
    <property type="term" value="F:glucosamine-6-phosphate deaminase activity"/>
    <property type="evidence" value="ECO:0007669"/>
    <property type="project" value="UniProtKB-UniRule"/>
</dbReference>
<dbReference type="GO" id="GO:0042802">
    <property type="term" value="F:identical protein binding"/>
    <property type="evidence" value="ECO:0007669"/>
    <property type="project" value="TreeGrafter"/>
</dbReference>
<dbReference type="GO" id="GO:0005975">
    <property type="term" value="P:carbohydrate metabolic process"/>
    <property type="evidence" value="ECO:0007669"/>
    <property type="project" value="InterPro"/>
</dbReference>
<dbReference type="GO" id="GO:0006043">
    <property type="term" value="P:glucosamine catabolic process"/>
    <property type="evidence" value="ECO:0007669"/>
    <property type="project" value="TreeGrafter"/>
</dbReference>
<dbReference type="GO" id="GO:0006046">
    <property type="term" value="P:N-acetylglucosamine catabolic process"/>
    <property type="evidence" value="ECO:0007669"/>
    <property type="project" value="TreeGrafter"/>
</dbReference>
<dbReference type="GO" id="GO:0019262">
    <property type="term" value="P:N-acetylneuraminate catabolic process"/>
    <property type="evidence" value="ECO:0007669"/>
    <property type="project" value="UniProtKB-UniRule"/>
</dbReference>
<dbReference type="CDD" id="cd01399">
    <property type="entry name" value="GlcN6P_deaminase"/>
    <property type="match status" value="1"/>
</dbReference>
<dbReference type="FunFam" id="3.40.50.1360:FF:000003">
    <property type="entry name" value="Glucosamine-6-phosphate deaminase"/>
    <property type="match status" value="1"/>
</dbReference>
<dbReference type="Gene3D" id="3.40.50.1360">
    <property type="match status" value="1"/>
</dbReference>
<dbReference type="HAMAP" id="MF_01241">
    <property type="entry name" value="GlcN6P_deamin"/>
    <property type="match status" value="1"/>
</dbReference>
<dbReference type="InterPro" id="IPR006148">
    <property type="entry name" value="Glc/Gal-6P_isomerase"/>
</dbReference>
<dbReference type="InterPro" id="IPR004547">
    <property type="entry name" value="Glucosamine6P_isomerase"/>
</dbReference>
<dbReference type="InterPro" id="IPR018321">
    <property type="entry name" value="Glucosamine6P_isomerase_CS"/>
</dbReference>
<dbReference type="InterPro" id="IPR037171">
    <property type="entry name" value="NagB/RpiA_transferase-like"/>
</dbReference>
<dbReference type="NCBIfam" id="TIGR00502">
    <property type="entry name" value="nagB"/>
    <property type="match status" value="1"/>
</dbReference>
<dbReference type="PANTHER" id="PTHR11280">
    <property type="entry name" value="GLUCOSAMINE-6-PHOSPHATE ISOMERASE"/>
    <property type="match status" value="1"/>
</dbReference>
<dbReference type="PANTHER" id="PTHR11280:SF5">
    <property type="entry name" value="GLUCOSAMINE-6-PHOSPHATE ISOMERASE"/>
    <property type="match status" value="1"/>
</dbReference>
<dbReference type="Pfam" id="PF01182">
    <property type="entry name" value="Glucosamine_iso"/>
    <property type="match status" value="1"/>
</dbReference>
<dbReference type="SUPFAM" id="SSF100950">
    <property type="entry name" value="NagB/RpiA/CoA transferase-like"/>
    <property type="match status" value="1"/>
</dbReference>
<dbReference type="PROSITE" id="PS01161">
    <property type="entry name" value="GLC_GALNAC_ISOMERASE"/>
    <property type="match status" value="1"/>
</dbReference>
<proteinExistence type="inferred from homology"/>
<gene>
    <name evidence="1" type="primary">nagB</name>
    <name type="ordered locus">BH0420</name>
</gene>
<name>NAGB_HALH5</name>
<accession>Q9KFQ8</accession>
<sequence length="246" mass="27520">MKIIEAKHFDDMSLKAAQFMIEKIQRDPTITLGLATGGTPQKMYELLINDHRTNGTSYHQVTTFNLDEYIGLDRHDPNSYYTYMHKALFDHIDIRDEQAFLPNGTASNFNAECERYEALIQQRGGIDLQVLGIGANGHIGFNEPGTSFESSTHIVKLTDSTREANARYFNDLSEVPTEAITMGIQSIMNAKEILLLASGKKKADALYQLIHGKVDESFPASVLQRHEQVTIIADREALQKVAVSSN</sequence>
<protein>
    <recommendedName>
        <fullName evidence="1">Glucosamine-6-phosphate deaminase</fullName>
        <ecNumber evidence="1">3.5.99.6</ecNumber>
    </recommendedName>
    <alternativeName>
        <fullName evidence="1">GlcN6P deaminase</fullName>
        <shortName evidence="1">GNPDA</shortName>
    </alternativeName>
    <alternativeName>
        <fullName evidence="1">Glucosamine-6-phosphate isomerase</fullName>
    </alternativeName>
</protein>
<keyword id="KW-0119">Carbohydrate metabolism</keyword>
<keyword id="KW-0378">Hydrolase</keyword>
<keyword id="KW-1185">Reference proteome</keyword>
<feature type="chain" id="PRO_0000160131" description="Glucosamine-6-phosphate deaminase">
    <location>
        <begin position="1"/>
        <end position="246"/>
    </location>
</feature>
<feature type="active site" description="Proton acceptor; for enolization step" evidence="1">
    <location>
        <position position="67"/>
    </location>
</feature>
<feature type="active site" description="For ring-opening step" evidence="1">
    <location>
        <position position="136"/>
    </location>
</feature>
<feature type="active site" description="Proton acceptor; for ring-opening step" evidence="1">
    <location>
        <position position="138"/>
    </location>
</feature>
<feature type="active site" description="For ring-opening step" evidence="1">
    <location>
        <position position="143"/>
    </location>
</feature>
<reference key="1">
    <citation type="journal article" date="2000" name="Nucleic Acids Res.">
        <title>Complete genome sequence of the alkaliphilic bacterium Bacillus halodurans and genomic sequence comparison with Bacillus subtilis.</title>
        <authorList>
            <person name="Takami H."/>
            <person name="Nakasone K."/>
            <person name="Takaki Y."/>
            <person name="Maeno G."/>
            <person name="Sasaki R."/>
            <person name="Masui N."/>
            <person name="Fuji F."/>
            <person name="Hirama C."/>
            <person name="Nakamura Y."/>
            <person name="Ogasawara N."/>
            <person name="Kuhara S."/>
            <person name="Horikoshi K."/>
        </authorList>
    </citation>
    <scope>NUCLEOTIDE SEQUENCE [LARGE SCALE GENOMIC DNA]</scope>
    <source>
        <strain>ATCC BAA-125 / DSM 18197 / FERM 7344 / JCM 9153 / C-125</strain>
    </source>
</reference>